<proteinExistence type="evidence at protein level"/>
<protein>
    <recommendedName>
        <fullName evidence="6">Large ribosomal subunit protein uL15</fullName>
    </recommendedName>
    <alternativeName>
        <fullName>50S ribosomal protein L15</fullName>
    </alternativeName>
    <alternativeName>
        <fullName>Hl9</fullName>
    </alternativeName>
    <alternativeName>
        <fullName>Hmal15</fullName>
    </alternativeName>
</protein>
<accession>P12737</accession>
<accession>Q5V1U4</accession>
<sequence length="165" mass="17973">MTSKKKRQRGSRTHGGGSHKNRRGAGHRGGRGDAGRDKHEFHNHEPLGKSGFKRPQKVQEEAATIDVREIDENVTLLAADDVAEVEDGGFRVDVRDVVEEADDADYVKVLGAGQVRHELTLIADDFSEGAREKVEGAGGSVELTDLGEERQAEAEETEDADADEE</sequence>
<comment type="function">
    <text>Binds to the 23S rRNA.</text>
</comment>
<comment type="subunit">
    <text evidence="2 3">Part of the 50S ribosomal subunit. Interacts weakly with proteins L18e and L32e.</text>
</comment>
<comment type="similarity">
    <text evidence="6">Belongs to the universal ribosomal protein uL15 family.</text>
</comment>
<feature type="initiator methionine" description="Removed" evidence="4 5">
    <location>
        <position position="1"/>
    </location>
</feature>
<feature type="chain" id="PRO_0000104860" description="Large ribosomal subunit protein uL15">
    <location>
        <begin position="2"/>
        <end position="165"/>
    </location>
</feature>
<feature type="region of interest" description="Disordered" evidence="1">
    <location>
        <begin position="1"/>
        <end position="59"/>
    </location>
</feature>
<feature type="region of interest" description="Disordered" evidence="1">
    <location>
        <begin position="133"/>
        <end position="165"/>
    </location>
</feature>
<feature type="compositionally biased region" description="Basic residues" evidence="1">
    <location>
        <begin position="1"/>
        <end position="29"/>
    </location>
</feature>
<feature type="compositionally biased region" description="Basic and acidic residues" evidence="1">
    <location>
        <begin position="30"/>
        <end position="47"/>
    </location>
</feature>
<feature type="compositionally biased region" description="Acidic residues" evidence="1">
    <location>
        <begin position="154"/>
        <end position="165"/>
    </location>
</feature>
<feature type="sequence conflict" description="In Ref. 5; AA sequence." evidence="6" ref="5">
    <original>T</original>
    <variation>D</variation>
    <location>
        <position position="2"/>
    </location>
</feature>
<feature type="sequence conflict" description="In Ref. 5; AA sequence." evidence="6" ref="5">
    <original>RG</original>
    <variation>NR</variation>
    <location>
        <begin position="31"/>
        <end position="32"/>
    </location>
</feature>
<feature type="helix" evidence="9">
    <location>
        <begin position="4"/>
        <end position="7"/>
    </location>
</feature>
<feature type="turn" evidence="13">
    <location>
        <begin position="8"/>
        <end position="10"/>
    </location>
</feature>
<feature type="strand" evidence="7">
    <location>
        <begin position="11"/>
        <end position="13"/>
    </location>
</feature>
<feature type="strand" evidence="11">
    <location>
        <begin position="16"/>
        <end position="18"/>
    </location>
</feature>
<feature type="strand" evidence="10">
    <location>
        <begin position="21"/>
        <end position="24"/>
    </location>
</feature>
<feature type="helix" evidence="9">
    <location>
        <begin position="25"/>
        <end position="28"/>
    </location>
</feature>
<feature type="turn" evidence="9">
    <location>
        <begin position="32"/>
        <end position="40"/>
    </location>
</feature>
<feature type="strand" evidence="12">
    <location>
        <begin position="42"/>
        <end position="44"/>
    </location>
</feature>
<feature type="helix" evidence="9">
    <location>
        <begin position="56"/>
        <end position="58"/>
    </location>
</feature>
<feature type="strand" evidence="9">
    <location>
        <begin position="62"/>
        <end position="66"/>
    </location>
</feature>
<feature type="helix" evidence="9">
    <location>
        <begin position="67"/>
        <end position="72"/>
    </location>
</feature>
<feature type="helix" evidence="9">
    <location>
        <begin position="75"/>
        <end position="77"/>
    </location>
</feature>
<feature type="strand" evidence="9">
    <location>
        <begin position="91"/>
        <end position="93"/>
    </location>
</feature>
<feature type="helix" evidence="9">
    <location>
        <begin position="94"/>
        <end position="96"/>
    </location>
</feature>
<feature type="turn" evidence="8">
    <location>
        <begin position="99"/>
        <end position="103"/>
    </location>
</feature>
<feature type="strand" evidence="9">
    <location>
        <begin position="104"/>
        <end position="110"/>
    </location>
</feature>
<feature type="strand" evidence="9">
    <location>
        <begin position="120"/>
        <end position="126"/>
    </location>
</feature>
<feature type="helix" evidence="9">
    <location>
        <begin position="128"/>
        <end position="136"/>
    </location>
</feature>
<feature type="strand" evidence="9">
    <location>
        <begin position="140"/>
        <end position="143"/>
    </location>
</feature>
<feature type="turn" evidence="9">
    <location>
        <begin position="145"/>
        <end position="147"/>
    </location>
</feature>
<evidence type="ECO:0000256" key="1">
    <source>
        <dbReference type="SAM" id="MobiDB-lite"/>
    </source>
</evidence>
<evidence type="ECO:0000269" key="2">
    <source>
    </source>
</evidence>
<evidence type="ECO:0000269" key="3">
    <source>
    </source>
</evidence>
<evidence type="ECO:0000269" key="4">
    <source>
    </source>
</evidence>
<evidence type="ECO:0000269" key="5">
    <source>
    </source>
</evidence>
<evidence type="ECO:0000305" key="6"/>
<evidence type="ECO:0007829" key="7">
    <source>
        <dbReference type="PDB" id="1JJ2"/>
    </source>
</evidence>
<evidence type="ECO:0007829" key="8">
    <source>
        <dbReference type="PDB" id="1VQ7"/>
    </source>
</evidence>
<evidence type="ECO:0007829" key="9">
    <source>
        <dbReference type="PDB" id="1VQ8"/>
    </source>
</evidence>
<evidence type="ECO:0007829" key="10">
    <source>
        <dbReference type="PDB" id="1VQO"/>
    </source>
</evidence>
<evidence type="ECO:0007829" key="11">
    <source>
        <dbReference type="PDB" id="1YIJ"/>
    </source>
</evidence>
<evidence type="ECO:0007829" key="12">
    <source>
        <dbReference type="PDB" id="3CCM"/>
    </source>
</evidence>
<evidence type="ECO:0007829" key="13">
    <source>
        <dbReference type="PDB" id="3CCQ"/>
    </source>
</evidence>
<keyword id="KW-0002">3D-structure</keyword>
<keyword id="KW-0903">Direct protein sequencing</keyword>
<keyword id="KW-1185">Reference proteome</keyword>
<keyword id="KW-0687">Ribonucleoprotein</keyword>
<keyword id="KW-0689">Ribosomal protein</keyword>
<keyword id="KW-0694">RNA-binding</keyword>
<keyword id="KW-0699">rRNA-binding</keyword>
<name>RL15_HALMA</name>
<gene>
    <name type="primary">rpl15</name>
    <name type="ordered locus">rrnAC1590</name>
</gene>
<organism>
    <name type="scientific">Haloarcula marismortui (strain ATCC 43049 / DSM 3752 / JCM 8966 / VKM B-1809)</name>
    <name type="common">Halobacterium marismortui</name>
    <dbReference type="NCBI Taxonomy" id="272569"/>
    <lineage>
        <taxon>Archaea</taxon>
        <taxon>Methanobacteriati</taxon>
        <taxon>Methanobacteriota</taxon>
        <taxon>Stenosarchaea group</taxon>
        <taxon>Halobacteria</taxon>
        <taxon>Halobacteriales</taxon>
        <taxon>Haloarculaceae</taxon>
        <taxon>Haloarcula</taxon>
    </lineage>
</organism>
<reference key="1">
    <citation type="journal article" date="1992" name="Biochim. Biophys. Acta">
        <title>The genes for ribosomal protein L15 and the protein equivalent to secY in the archaebacterium Haloarcula (Halobacterium) marismortui.</title>
        <authorList>
            <person name="Arndt E."/>
        </authorList>
    </citation>
    <scope>NUCLEOTIDE SEQUENCE [GENOMIC DNA]</scope>
</reference>
<reference key="2">
    <citation type="journal article" date="2004" name="Genome Res.">
        <title>Genome sequence of Haloarcula marismortui: a halophilic archaeon from the Dead Sea.</title>
        <authorList>
            <person name="Baliga N.S."/>
            <person name="Bonneau R."/>
            <person name="Facciotti M.T."/>
            <person name="Pan M."/>
            <person name="Glusman G."/>
            <person name="Deutsch E.W."/>
            <person name="Shannon P."/>
            <person name="Chiu Y."/>
            <person name="Weng R.S."/>
            <person name="Gan R.R."/>
            <person name="Hung P."/>
            <person name="Date S.V."/>
            <person name="Marcotte E."/>
            <person name="Hood L."/>
            <person name="Ng W.V."/>
        </authorList>
    </citation>
    <scope>NUCLEOTIDE SEQUENCE [LARGE SCALE GENOMIC DNA]</scope>
    <source>
        <strain>ATCC 43049 / DSM 3752 / JCM 8966 / VKM B-1809</strain>
    </source>
</reference>
<reference key="3">
    <citation type="journal article" date="1989" name="Eur. J. Biochem.">
        <title>Primary structures of five ribosomal proteins from the archaebacterium Halobacterium marismortui and their structural relationships to eubacterial and eukaryotic ribosomal proteins.</title>
        <authorList>
            <person name="Hatakeyama T."/>
            <person name="Kaufmann F."/>
            <person name="Schroeter B."/>
            <person name="Hatakeyama T."/>
        </authorList>
    </citation>
    <scope>PROTEIN SEQUENCE OF 2-155</scope>
</reference>
<reference key="4">
    <citation type="journal article" date="1991" name="Mol. Gen. Genet.">
        <title>Organization and nucleotide sequence of ten ribosomal protein genes from the region equivalent to the spectinomycin operon in the archaebacterium Halobacterium marismortui.</title>
        <authorList>
            <person name="Scholzen T."/>
            <person name="Arndt E."/>
        </authorList>
    </citation>
    <scope>NUCLEOTIDE SEQUENCE [GENOMIC DNA] OF 1-70</scope>
</reference>
<reference key="5">
    <citation type="journal article" date="1988" name="Biochemistry">
        <title>Extended N-terminal sequencing of proteins of archaebacterial ribosomes blotted from two-dimensional gels onto glass fiber and poly(vinylidene difluoride) membrane.</title>
        <authorList>
            <person name="Walsh M.J."/>
            <person name="McDougall J."/>
            <person name="Wittmann-Liebold B."/>
        </authorList>
    </citation>
    <scope>PROTEIN SEQUENCE OF 2-32</scope>
</reference>
<reference key="6">
    <citation type="journal article" date="2000" name="Science">
        <title>The complete atomic structure of the large ribosomal subunit at 2.4 A resolution.</title>
        <authorList>
            <person name="Ban N."/>
            <person name="Nissen P."/>
            <person name="Hansen J."/>
            <person name="Moore P.B."/>
            <person name="Steitz T.A."/>
        </authorList>
    </citation>
    <scope>X-RAY CRYSTALLOGRAPHY (2.4 ANGSTROMS) OF THE 50S SUBUNIT</scope>
    <source>
        <strain>ATCC 43049 / DSM 3752 / JCM 8966 / VKM B-1809</strain>
    </source>
</reference>
<reference key="7">
    <citation type="journal article" date="2000" name="Science">
        <title>The structural basis of ribosome activity in peptide bond synthesis.</title>
        <authorList>
            <person name="Nissen P."/>
            <person name="Hansen J."/>
            <person name="Ban N."/>
            <person name="Moore P.B."/>
            <person name="Steitz T.A."/>
        </authorList>
    </citation>
    <scope>X-RAY CRYSTALLOGRAPHY (3.0 ANGSTROMS) OF THE 50S SUBUNIT</scope>
    <source>
        <strain>ATCC 43049 / DSM 3752 / JCM 8966 / VKM B-1809</strain>
    </source>
</reference>
<reference key="8">
    <citation type="journal article" date="2002" name="Nat. Struct. Biol.">
        <title>A pre-translocational intermediate in protein synthesis observed in crystals of enzymatically active 50S subunits.</title>
        <authorList>
            <person name="Schmeing T.M."/>
            <person name="Seila A.C."/>
            <person name="Hansen J.L."/>
            <person name="Freeborn B."/>
            <person name="Soukup J.K."/>
            <person name="Scaringe S.A."/>
            <person name="Strobel S.A."/>
            <person name="Moore P.B."/>
            <person name="Steitz T.A."/>
        </authorList>
    </citation>
    <scope>X-RAY CRYSTALLOGRAPHY (3.1 ANGSTROMS) OF THE 50S SUBUNIT</scope>
    <source>
        <strain>ATCC 43049 / DSM 3752 / JCM 8966 / VKM B-1809</strain>
    </source>
</reference>
<reference key="9">
    <citation type="journal article" date="2001" name="EMBO J.">
        <title>The kink-turn: a new RNA secondary structure motif.</title>
        <authorList>
            <person name="Klein D.J."/>
            <person name="Schmeing T.M."/>
            <person name="Moore P.B."/>
            <person name="Steitz T.A."/>
        </authorList>
    </citation>
    <scope>X-RAY CRYSTALLOGRAPHY (2.4 ANGSTROMS) OF THE 50S SUBUNIT</scope>
    <source>
        <strain>ATCC 43049 / DSM 3752 / JCM 8966 / VKM B-1809</strain>
    </source>
</reference>
<reference key="10">
    <citation type="journal article" date="2002" name="Mol. Cell">
        <title>The structures of four macrolide antibiotics bound to the large ribosomal subunit.</title>
        <authorList>
            <person name="Hansen J.L."/>
            <person name="Ippolito J.A."/>
            <person name="Ban N."/>
            <person name="Nissen P."/>
            <person name="Moore P.B."/>
            <person name="Steitz T.A."/>
        </authorList>
    </citation>
    <scope>X-RAY CRYSTALLOGRAPHY (3.0 ANGSTROMS) OF THE 50S SUBUNIT IN COMPLEX WITH FOUR MACROLIDE ANTIBIOTICS</scope>
    <source>
        <strain>ATCC 43049 / DSM 3752 / JCM 8966 / VKM B-1809</strain>
    </source>
</reference>
<reference key="11">
    <citation type="journal article" date="2002" name="Proc. Natl. Acad. Sci. U.S.A.">
        <title>Structural insights into peptide bond formation.</title>
        <authorList>
            <person name="Hansen J.L."/>
            <person name="Schmeing T.M."/>
            <person name="Moore P.B."/>
            <person name="Steitz T.A."/>
        </authorList>
    </citation>
    <scope>X-RAY CRYSTALLOGRAPHY (2.8 ANGSTROMS) OF THE 50S SUBUNIT</scope>
    <source>
        <strain>ATCC 43049 / DSM 3752 / JCM 8966 / VKM B-1809</strain>
    </source>
</reference>
<reference key="12">
    <citation type="journal article" date="2003" name="J. Mol. Biol.">
        <title>Structures of five antibiotics bound at the peptidyl transferase center of the large ribosomal subunit.</title>
        <authorList>
            <person name="Hansen J.L."/>
            <person name="Moore P.B."/>
            <person name="Steitz T.A."/>
        </authorList>
    </citation>
    <scope>X-RAY CRYSTALLOGRAPHY (3.0 ANGSTROMS) OF THE 50S SUBUNIT IN COMPLEX WITH FIVE ANTIBIOTICS AT THE PEPTIDYL TRANSFERASE CENTER</scope>
    <source>
        <strain>ATCC 43049 / DSM 3752 / JCM 8966 / VKM B-1809</strain>
    </source>
</reference>
<reference key="13">
    <citation type="journal article" date="2003" name="RNA">
        <title>Structures of deacylated tRNA mimics bound to the E site of the large ribosomal subunit.</title>
        <authorList>
            <person name="Schmeing T.M."/>
            <person name="Moore P.B."/>
            <person name="Steitz T.A."/>
        </authorList>
    </citation>
    <scope>X-RAY CRYSTALLOGRAPHY (2.9 ANGSTROMS) OF THE 50S SUBUNIT WITH TWO DIFFERENT E SITE SUBSTRATES</scope>
</reference>
<reference key="14">
    <citation type="journal article" date="2013" name="Acta Crystallogr. D">
        <title>Revisiting the Haloarcula marismortui 50S ribosomal subunit model.</title>
        <authorList>
            <person name="Gabdulkhakov A."/>
            <person name="Nikonov S."/>
            <person name="Garber M."/>
        </authorList>
    </citation>
    <scope>X-RAY CRYSTALLOGRAPHY (2.4 ANGSTROMS) OF THE 50S SUBUNIT</scope>
</reference>
<dbReference type="EMBL" id="X63127">
    <property type="protein sequence ID" value="CAA44837.1"/>
    <property type="molecule type" value="Genomic_DNA"/>
</dbReference>
<dbReference type="EMBL" id="AY596297">
    <property type="protein sequence ID" value="AAV46508.1"/>
    <property type="molecule type" value="Genomic_DNA"/>
</dbReference>
<dbReference type="EMBL" id="X58395">
    <property type="protein sequence ID" value="CAA41293.1"/>
    <property type="molecule type" value="Genomic_DNA"/>
</dbReference>
<dbReference type="PIR" id="S22349">
    <property type="entry name" value="R6HS15"/>
</dbReference>
<dbReference type="RefSeq" id="WP_011223737.1">
    <property type="nucleotide sequence ID" value="NZ_CP039138.1"/>
</dbReference>
<dbReference type="PDB" id="1FFK">
    <property type="method" value="X-ray"/>
    <property type="resolution" value="2.40 A"/>
    <property type="chains" value="J=2-165"/>
</dbReference>
<dbReference type="PDB" id="1JJ2">
    <property type="method" value="X-ray"/>
    <property type="resolution" value="2.40 A"/>
    <property type="chains" value="K=2-165"/>
</dbReference>
<dbReference type="PDB" id="1K73">
    <property type="method" value="X-ray"/>
    <property type="resolution" value="3.01 A"/>
    <property type="chains" value="M=2-165"/>
</dbReference>
<dbReference type="PDB" id="1K8A">
    <property type="method" value="X-ray"/>
    <property type="resolution" value="3.00 A"/>
    <property type="chains" value="M=2-165"/>
</dbReference>
<dbReference type="PDB" id="1K9M">
    <property type="method" value="X-ray"/>
    <property type="resolution" value="3.00 A"/>
    <property type="chains" value="M=2-165"/>
</dbReference>
<dbReference type="PDB" id="1KC8">
    <property type="method" value="X-ray"/>
    <property type="resolution" value="3.01 A"/>
    <property type="chains" value="M=2-165"/>
</dbReference>
<dbReference type="PDB" id="1KD1">
    <property type="method" value="X-ray"/>
    <property type="resolution" value="3.00 A"/>
    <property type="chains" value="M=2-165"/>
</dbReference>
<dbReference type="PDB" id="1KQS">
    <property type="method" value="X-ray"/>
    <property type="resolution" value="3.10 A"/>
    <property type="chains" value="K=2-165"/>
</dbReference>
<dbReference type="PDB" id="1M1K">
    <property type="method" value="X-ray"/>
    <property type="resolution" value="3.20 A"/>
    <property type="chains" value="M=2-165"/>
</dbReference>
<dbReference type="PDB" id="1M90">
    <property type="method" value="X-ray"/>
    <property type="resolution" value="2.80 A"/>
    <property type="chains" value="M=2-165"/>
</dbReference>
<dbReference type="PDB" id="1ML5">
    <property type="method" value="EM"/>
    <property type="resolution" value="14.00 A"/>
    <property type="chains" value="o=2-165"/>
</dbReference>
<dbReference type="PDB" id="1N8R">
    <property type="method" value="X-ray"/>
    <property type="resolution" value="3.00 A"/>
    <property type="chains" value="M=2-165"/>
</dbReference>
<dbReference type="PDB" id="1NJI">
    <property type="method" value="X-ray"/>
    <property type="resolution" value="3.00 A"/>
    <property type="chains" value="M=2-165"/>
</dbReference>
<dbReference type="PDB" id="1Q7Y">
    <property type="method" value="X-ray"/>
    <property type="resolution" value="3.20 A"/>
    <property type="chains" value="M=2-165"/>
</dbReference>
<dbReference type="PDB" id="1Q81">
    <property type="method" value="X-ray"/>
    <property type="resolution" value="2.95 A"/>
    <property type="chains" value="M=2-165"/>
</dbReference>
<dbReference type="PDB" id="1Q82">
    <property type="method" value="X-ray"/>
    <property type="resolution" value="2.98 A"/>
    <property type="chains" value="M=2-165"/>
</dbReference>
<dbReference type="PDB" id="1Q86">
    <property type="method" value="X-ray"/>
    <property type="resolution" value="3.00 A"/>
    <property type="chains" value="M=2-165"/>
</dbReference>
<dbReference type="PDB" id="1QVF">
    <property type="method" value="X-ray"/>
    <property type="resolution" value="3.10 A"/>
    <property type="chains" value="K=2-165"/>
</dbReference>
<dbReference type="PDB" id="1QVG">
    <property type="method" value="X-ray"/>
    <property type="resolution" value="2.90 A"/>
    <property type="chains" value="K=2-165"/>
</dbReference>
<dbReference type="PDB" id="1S72">
    <property type="method" value="X-ray"/>
    <property type="resolution" value="2.40 A"/>
    <property type="chains" value="L=1-165"/>
</dbReference>
<dbReference type="PDB" id="1VQ4">
    <property type="method" value="X-ray"/>
    <property type="resolution" value="2.70 A"/>
    <property type="chains" value="L=1-165"/>
</dbReference>
<dbReference type="PDB" id="1VQ5">
    <property type="method" value="X-ray"/>
    <property type="resolution" value="2.60 A"/>
    <property type="chains" value="L=1-165"/>
</dbReference>
<dbReference type="PDB" id="1VQ6">
    <property type="method" value="X-ray"/>
    <property type="resolution" value="2.70 A"/>
    <property type="chains" value="L=1-165"/>
</dbReference>
<dbReference type="PDB" id="1VQ7">
    <property type="method" value="X-ray"/>
    <property type="resolution" value="2.50 A"/>
    <property type="chains" value="L=1-165"/>
</dbReference>
<dbReference type="PDB" id="1VQ8">
    <property type="method" value="X-ray"/>
    <property type="resolution" value="2.20 A"/>
    <property type="chains" value="L=1-165"/>
</dbReference>
<dbReference type="PDB" id="1VQ9">
    <property type="method" value="X-ray"/>
    <property type="resolution" value="2.40 A"/>
    <property type="chains" value="L=1-165"/>
</dbReference>
<dbReference type="PDB" id="1VQK">
    <property type="method" value="X-ray"/>
    <property type="resolution" value="2.30 A"/>
    <property type="chains" value="L=1-165"/>
</dbReference>
<dbReference type="PDB" id="1VQL">
    <property type="method" value="X-ray"/>
    <property type="resolution" value="2.30 A"/>
    <property type="chains" value="L=1-165"/>
</dbReference>
<dbReference type="PDB" id="1VQM">
    <property type="method" value="X-ray"/>
    <property type="resolution" value="2.30 A"/>
    <property type="chains" value="L=1-165"/>
</dbReference>
<dbReference type="PDB" id="1VQN">
    <property type="method" value="X-ray"/>
    <property type="resolution" value="2.40 A"/>
    <property type="chains" value="L=1-165"/>
</dbReference>
<dbReference type="PDB" id="1VQO">
    <property type="method" value="X-ray"/>
    <property type="resolution" value="2.20 A"/>
    <property type="chains" value="L=1-165"/>
</dbReference>
<dbReference type="PDB" id="1VQP">
    <property type="method" value="X-ray"/>
    <property type="resolution" value="2.25 A"/>
    <property type="chains" value="L=1-165"/>
</dbReference>
<dbReference type="PDB" id="1W2B">
    <property type="method" value="X-ray"/>
    <property type="resolution" value="3.50 A"/>
    <property type="chains" value="K=2-165"/>
</dbReference>
<dbReference type="PDB" id="1YHQ">
    <property type="method" value="X-ray"/>
    <property type="resolution" value="2.40 A"/>
    <property type="chains" value="L=1-165"/>
</dbReference>
<dbReference type="PDB" id="1YI2">
    <property type="method" value="X-ray"/>
    <property type="resolution" value="2.65 A"/>
    <property type="chains" value="L=1-165"/>
</dbReference>
<dbReference type="PDB" id="1YIJ">
    <property type="method" value="X-ray"/>
    <property type="resolution" value="2.60 A"/>
    <property type="chains" value="L=1-165"/>
</dbReference>
<dbReference type="PDB" id="1YIT">
    <property type="method" value="X-ray"/>
    <property type="resolution" value="2.80 A"/>
    <property type="chains" value="L=1-165"/>
</dbReference>
<dbReference type="PDB" id="1YJ9">
    <property type="method" value="X-ray"/>
    <property type="resolution" value="2.90 A"/>
    <property type="chains" value="L=1-165"/>
</dbReference>
<dbReference type="PDB" id="1YJN">
    <property type="method" value="X-ray"/>
    <property type="resolution" value="3.00 A"/>
    <property type="chains" value="L=1-165"/>
</dbReference>
<dbReference type="PDB" id="1YJW">
    <property type="method" value="X-ray"/>
    <property type="resolution" value="2.90 A"/>
    <property type="chains" value="L=1-165"/>
</dbReference>
<dbReference type="PDB" id="2OTJ">
    <property type="method" value="X-ray"/>
    <property type="resolution" value="2.90 A"/>
    <property type="chains" value="L=1-165"/>
</dbReference>
<dbReference type="PDB" id="2OTL">
    <property type="method" value="X-ray"/>
    <property type="resolution" value="2.70 A"/>
    <property type="chains" value="L=1-165"/>
</dbReference>
<dbReference type="PDB" id="2QA4">
    <property type="method" value="X-ray"/>
    <property type="resolution" value="3.00 A"/>
    <property type="chains" value="L=1-165"/>
</dbReference>
<dbReference type="PDB" id="2QEX">
    <property type="method" value="X-ray"/>
    <property type="resolution" value="2.90 A"/>
    <property type="chains" value="L=1-165"/>
</dbReference>
<dbReference type="PDB" id="3CC2">
    <property type="method" value="X-ray"/>
    <property type="resolution" value="2.40 A"/>
    <property type="chains" value="L=1-165"/>
</dbReference>
<dbReference type="PDB" id="3CC4">
    <property type="method" value="X-ray"/>
    <property type="resolution" value="2.70 A"/>
    <property type="chains" value="L=1-165"/>
</dbReference>
<dbReference type="PDB" id="3CC7">
    <property type="method" value="X-ray"/>
    <property type="resolution" value="2.70 A"/>
    <property type="chains" value="L=1-165"/>
</dbReference>
<dbReference type="PDB" id="3CCE">
    <property type="method" value="X-ray"/>
    <property type="resolution" value="2.75 A"/>
    <property type="chains" value="L=1-165"/>
</dbReference>
<dbReference type="PDB" id="3CCJ">
    <property type="method" value="X-ray"/>
    <property type="resolution" value="2.70 A"/>
    <property type="chains" value="L=1-165"/>
</dbReference>
<dbReference type="PDB" id="3CCL">
    <property type="method" value="X-ray"/>
    <property type="resolution" value="2.90 A"/>
    <property type="chains" value="L=1-165"/>
</dbReference>
<dbReference type="PDB" id="3CCM">
    <property type="method" value="X-ray"/>
    <property type="resolution" value="2.55 A"/>
    <property type="chains" value="L=1-165"/>
</dbReference>
<dbReference type="PDB" id="3CCQ">
    <property type="method" value="X-ray"/>
    <property type="resolution" value="2.90 A"/>
    <property type="chains" value="L=1-165"/>
</dbReference>
<dbReference type="PDB" id="3CCR">
    <property type="method" value="X-ray"/>
    <property type="resolution" value="3.00 A"/>
    <property type="chains" value="L=1-165"/>
</dbReference>
<dbReference type="PDB" id="3CCS">
    <property type="method" value="X-ray"/>
    <property type="resolution" value="2.95 A"/>
    <property type="chains" value="L=1-165"/>
</dbReference>
<dbReference type="PDB" id="3CCU">
    <property type="method" value="X-ray"/>
    <property type="resolution" value="2.80 A"/>
    <property type="chains" value="L=1-165"/>
</dbReference>
<dbReference type="PDB" id="3CCV">
    <property type="method" value="X-ray"/>
    <property type="resolution" value="2.90 A"/>
    <property type="chains" value="L=1-165"/>
</dbReference>
<dbReference type="PDB" id="3CD6">
    <property type="method" value="X-ray"/>
    <property type="resolution" value="2.75 A"/>
    <property type="chains" value="L=1-165"/>
</dbReference>
<dbReference type="PDB" id="3CMA">
    <property type="method" value="X-ray"/>
    <property type="resolution" value="2.80 A"/>
    <property type="chains" value="L=1-165"/>
</dbReference>
<dbReference type="PDB" id="3CME">
    <property type="method" value="X-ray"/>
    <property type="resolution" value="2.95 A"/>
    <property type="chains" value="L=1-165"/>
</dbReference>
<dbReference type="PDB" id="3CPW">
    <property type="method" value="X-ray"/>
    <property type="resolution" value="2.70 A"/>
    <property type="chains" value="K=1-165"/>
</dbReference>
<dbReference type="PDB" id="3CXC">
    <property type="method" value="X-ray"/>
    <property type="resolution" value="3.00 A"/>
    <property type="chains" value="K=2-165"/>
</dbReference>
<dbReference type="PDB" id="3G4S">
    <property type="method" value="X-ray"/>
    <property type="resolution" value="3.20 A"/>
    <property type="chains" value="L=1-165"/>
</dbReference>
<dbReference type="PDB" id="3G6E">
    <property type="method" value="X-ray"/>
    <property type="resolution" value="2.70 A"/>
    <property type="chains" value="L=1-165"/>
</dbReference>
<dbReference type="PDB" id="3G71">
    <property type="method" value="X-ray"/>
    <property type="resolution" value="2.85 A"/>
    <property type="chains" value="L=1-165"/>
</dbReference>
<dbReference type="PDB" id="3I55">
    <property type="method" value="X-ray"/>
    <property type="resolution" value="3.11 A"/>
    <property type="chains" value="L=1-165"/>
</dbReference>
<dbReference type="PDB" id="3I56">
    <property type="method" value="X-ray"/>
    <property type="resolution" value="2.90 A"/>
    <property type="chains" value="L=1-165"/>
</dbReference>
<dbReference type="PDB" id="3OW2">
    <property type="method" value="X-ray"/>
    <property type="resolution" value="2.70 A"/>
    <property type="chains" value="K=2-151"/>
</dbReference>
<dbReference type="PDB" id="4ADX">
    <property type="method" value="EM"/>
    <property type="resolution" value="6.60 A"/>
    <property type="chains" value="L=1-165"/>
</dbReference>
<dbReference type="PDB" id="4V42">
    <property type="method" value="X-ray"/>
    <property type="resolution" value="5.50 A"/>
    <property type="chains" value="BO=2-165"/>
</dbReference>
<dbReference type="PDB" id="4V4R">
    <property type="method" value="X-ray"/>
    <property type="resolution" value="5.90 A"/>
    <property type="chains" value="P=2-165"/>
</dbReference>
<dbReference type="PDB" id="4V4S">
    <property type="method" value="X-ray"/>
    <property type="resolution" value="6.76 A"/>
    <property type="chains" value="P=2-165"/>
</dbReference>
<dbReference type="PDB" id="4V4T">
    <property type="method" value="X-ray"/>
    <property type="resolution" value="6.46 A"/>
    <property type="chains" value="P=2-165"/>
</dbReference>
<dbReference type="PDB" id="4V9F">
    <property type="method" value="X-ray"/>
    <property type="resolution" value="2.40 A"/>
    <property type="chains" value="L=1-165"/>
</dbReference>
<dbReference type="PDBsum" id="1FFK"/>
<dbReference type="PDBsum" id="1JJ2"/>
<dbReference type="PDBsum" id="1K73"/>
<dbReference type="PDBsum" id="1K8A"/>
<dbReference type="PDBsum" id="1K9M"/>
<dbReference type="PDBsum" id="1KC8"/>
<dbReference type="PDBsum" id="1KD1"/>
<dbReference type="PDBsum" id="1KQS"/>
<dbReference type="PDBsum" id="1M1K"/>
<dbReference type="PDBsum" id="1M90"/>
<dbReference type="PDBsum" id="1ML5"/>
<dbReference type="PDBsum" id="1N8R"/>
<dbReference type="PDBsum" id="1NJI"/>
<dbReference type="PDBsum" id="1Q7Y"/>
<dbReference type="PDBsum" id="1Q81"/>
<dbReference type="PDBsum" id="1Q82"/>
<dbReference type="PDBsum" id="1Q86"/>
<dbReference type="PDBsum" id="1QVF"/>
<dbReference type="PDBsum" id="1QVG"/>
<dbReference type="PDBsum" id="1S72"/>
<dbReference type="PDBsum" id="1VQ4"/>
<dbReference type="PDBsum" id="1VQ5"/>
<dbReference type="PDBsum" id="1VQ6"/>
<dbReference type="PDBsum" id="1VQ7"/>
<dbReference type="PDBsum" id="1VQ8"/>
<dbReference type="PDBsum" id="1VQ9"/>
<dbReference type="PDBsum" id="1VQK"/>
<dbReference type="PDBsum" id="1VQL"/>
<dbReference type="PDBsum" id="1VQM"/>
<dbReference type="PDBsum" id="1VQN"/>
<dbReference type="PDBsum" id="1VQO"/>
<dbReference type="PDBsum" id="1VQP"/>
<dbReference type="PDBsum" id="1W2B"/>
<dbReference type="PDBsum" id="1YHQ"/>
<dbReference type="PDBsum" id="1YI2"/>
<dbReference type="PDBsum" id="1YIJ"/>
<dbReference type="PDBsum" id="1YIT"/>
<dbReference type="PDBsum" id="1YJ9"/>
<dbReference type="PDBsum" id="1YJN"/>
<dbReference type="PDBsum" id="1YJW"/>
<dbReference type="PDBsum" id="2OTJ"/>
<dbReference type="PDBsum" id="2OTL"/>
<dbReference type="PDBsum" id="2QA4"/>
<dbReference type="PDBsum" id="2QEX"/>
<dbReference type="PDBsum" id="3CC2"/>
<dbReference type="PDBsum" id="3CC4"/>
<dbReference type="PDBsum" id="3CC7"/>
<dbReference type="PDBsum" id="3CCE"/>
<dbReference type="PDBsum" id="3CCJ"/>
<dbReference type="PDBsum" id="3CCL"/>
<dbReference type="PDBsum" id="3CCM"/>
<dbReference type="PDBsum" id="3CCQ"/>
<dbReference type="PDBsum" id="3CCR"/>
<dbReference type="PDBsum" id="3CCS"/>
<dbReference type="PDBsum" id="3CCU"/>
<dbReference type="PDBsum" id="3CCV"/>
<dbReference type="PDBsum" id="3CD6"/>
<dbReference type="PDBsum" id="3CMA"/>
<dbReference type="PDBsum" id="3CME"/>
<dbReference type="PDBsum" id="3CPW"/>
<dbReference type="PDBsum" id="3CXC"/>
<dbReference type="PDBsum" id="3G4S"/>
<dbReference type="PDBsum" id="3G6E"/>
<dbReference type="PDBsum" id="3G71"/>
<dbReference type="PDBsum" id="3I55"/>
<dbReference type="PDBsum" id="3I56"/>
<dbReference type="PDBsum" id="3OW2"/>
<dbReference type="PDBsum" id="4ADX"/>
<dbReference type="PDBsum" id="4V42"/>
<dbReference type="PDBsum" id="4V4R"/>
<dbReference type="PDBsum" id="4V4S"/>
<dbReference type="PDBsum" id="4V4T"/>
<dbReference type="PDBsum" id="4V9F"/>
<dbReference type="SMR" id="P12737"/>
<dbReference type="IntAct" id="P12737">
    <property type="interactions" value="3"/>
</dbReference>
<dbReference type="STRING" id="272569.rrnAC1590"/>
<dbReference type="PaxDb" id="272569-rrnAC1590"/>
<dbReference type="EnsemblBacteria" id="AAV46508">
    <property type="protein sequence ID" value="AAV46508"/>
    <property type="gene ID" value="rrnAC1590"/>
</dbReference>
<dbReference type="KEGG" id="hma:rrnAC1590"/>
<dbReference type="PATRIC" id="fig|272569.17.peg.2279"/>
<dbReference type="eggNOG" id="arCOG00779">
    <property type="taxonomic scope" value="Archaea"/>
</dbReference>
<dbReference type="HOGENOM" id="CLU_109163_0_0_2"/>
<dbReference type="EvolutionaryTrace" id="P12737"/>
<dbReference type="Proteomes" id="UP000001169">
    <property type="component" value="Chromosome I"/>
</dbReference>
<dbReference type="GO" id="GO:0022625">
    <property type="term" value="C:cytosolic large ribosomal subunit"/>
    <property type="evidence" value="ECO:0007669"/>
    <property type="project" value="TreeGrafter"/>
</dbReference>
<dbReference type="GO" id="GO:0019843">
    <property type="term" value="F:rRNA binding"/>
    <property type="evidence" value="ECO:0007669"/>
    <property type="project" value="UniProtKB-UniRule"/>
</dbReference>
<dbReference type="GO" id="GO:0003735">
    <property type="term" value="F:structural constituent of ribosome"/>
    <property type="evidence" value="ECO:0007669"/>
    <property type="project" value="InterPro"/>
</dbReference>
<dbReference type="GO" id="GO:0006412">
    <property type="term" value="P:translation"/>
    <property type="evidence" value="ECO:0007669"/>
    <property type="project" value="UniProtKB-UniRule"/>
</dbReference>
<dbReference type="Gene3D" id="3.100.10.10">
    <property type="match status" value="1"/>
</dbReference>
<dbReference type="Gene3D" id="4.10.990.10">
    <property type="match status" value="1"/>
</dbReference>
<dbReference type="HAMAP" id="MF_01341">
    <property type="entry name" value="Ribosomal_uL15"/>
    <property type="match status" value="1"/>
</dbReference>
<dbReference type="InterPro" id="IPR027386">
    <property type="entry name" value="Rbsml_uL15_N"/>
</dbReference>
<dbReference type="InterPro" id="IPR030878">
    <property type="entry name" value="Ribosomal_uL15"/>
</dbReference>
<dbReference type="InterPro" id="IPR021131">
    <property type="entry name" value="Ribosomal_uL15/eL18"/>
</dbReference>
<dbReference type="InterPro" id="IPR036227">
    <property type="entry name" value="Ribosomal_uL15/eL18_sf"/>
</dbReference>
<dbReference type="InterPro" id="IPR001196">
    <property type="entry name" value="Ribosomal_uL15_CS"/>
</dbReference>
<dbReference type="PANTHER" id="PTHR11721">
    <property type="entry name" value="60S RIBOSOMAL PROTEIN L27A"/>
    <property type="match status" value="1"/>
</dbReference>
<dbReference type="PANTHER" id="PTHR11721:SF3">
    <property type="entry name" value="LARGE RIBOSOMAL SUBUNIT PROTEIN UL15"/>
    <property type="match status" value="1"/>
</dbReference>
<dbReference type="Pfam" id="PF00828">
    <property type="entry name" value="Ribosomal_L27A"/>
    <property type="match status" value="1"/>
</dbReference>
<dbReference type="SUPFAM" id="SSF52080">
    <property type="entry name" value="Ribosomal proteins L15p and L18e"/>
    <property type="match status" value="1"/>
</dbReference>
<dbReference type="PROSITE" id="PS00475">
    <property type="entry name" value="RIBOSOMAL_L15"/>
    <property type="match status" value="1"/>
</dbReference>